<accession>B1JW20</accession>
<dbReference type="EMBL" id="CP000958">
    <property type="protein sequence ID" value="ACA89900.1"/>
    <property type="molecule type" value="Genomic_DNA"/>
</dbReference>
<dbReference type="RefSeq" id="WP_006476837.1">
    <property type="nucleotide sequence ID" value="NC_010508.1"/>
</dbReference>
<dbReference type="SMR" id="B1JW20"/>
<dbReference type="GeneID" id="83047520"/>
<dbReference type="KEGG" id="bcm:Bcenmc03_0722"/>
<dbReference type="HOGENOM" id="CLU_017633_0_7_4"/>
<dbReference type="Proteomes" id="UP000002169">
    <property type="component" value="Chromosome 1"/>
</dbReference>
<dbReference type="GO" id="GO:0005737">
    <property type="term" value="C:cytoplasm"/>
    <property type="evidence" value="ECO:0007669"/>
    <property type="project" value="UniProtKB-SubCell"/>
</dbReference>
<dbReference type="GO" id="GO:0005524">
    <property type="term" value="F:ATP binding"/>
    <property type="evidence" value="ECO:0007669"/>
    <property type="project" value="InterPro"/>
</dbReference>
<dbReference type="GO" id="GO:0031072">
    <property type="term" value="F:heat shock protein binding"/>
    <property type="evidence" value="ECO:0007669"/>
    <property type="project" value="InterPro"/>
</dbReference>
<dbReference type="GO" id="GO:0051082">
    <property type="term" value="F:unfolded protein binding"/>
    <property type="evidence" value="ECO:0007669"/>
    <property type="project" value="UniProtKB-UniRule"/>
</dbReference>
<dbReference type="GO" id="GO:0008270">
    <property type="term" value="F:zinc ion binding"/>
    <property type="evidence" value="ECO:0007669"/>
    <property type="project" value="UniProtKB-UniRule"/>
</dbReference>
<dbReference type="GO" id="GO:0051085">
    <property type="term" value="P:chaperone cofactor-dependent protein refolding"/>
    <property type="evidence" value="ECO:0007669"/>
    <property type="project" value="TreeGrafter"/>
</dbReference>
<dbReference type="GO" id="GO:0006260">
    <property type="term" value="P:DNA replication"/>
    <property type="evidence" value="ECO:0007669"/>
    <property type="project" value="UniProtKB-KW"/>
</dbReference>
<dbReference type="GO" id="GO:0042026">
    <property type="term" value="P:protein refolding"/>
    <property type="evidence" value="ECO:0007669"/>
    <property type="project" value="TreeGrafter"/>
</dbReference>
<dbReference type="GO" id="GO:0009408">
    <property type="term" value="P:response to heat"/>
    <property type="evidence" value="ECO:0007669"/>
    <property type="project" value="InterPro"/>
</dbReference>
<dbReference type="CDD" id="cd06257">
    <property type="entry name" value="DnaJ"/>
    <property type="match status" value="1"/>
</dbReference>
<dbReference type="CDD" id="cd10747">
    <property type="entry name" value="DnaJ_C"/>
    <property type="match status" value="1"/>
</dbReference>
<dbReference type="CDD" id="cd10719">
    <property type="entry name" value="DnaJ_zf"/>
    <property type="match status" value="1"/>
</dbReference>
<dbReference type="FunFam" id="1.10.287.110:FF:000031">
    <property type="entry name" value="Molecular chaperone DnaJ"/>
    <property type="match status" value="1"/>
</dbReference>
<dbReference type="FunFam" id="2.10.230.10:FF:000002">
    <property type="entry name" value="Molecular chaperone DnaJ"/>
    <property type="match status" value="1"/>
</dbReference>
<dbReference type="FunFam" id="2.60.260.20:FF:000004">
    <property type="entry name" value="Molecular chaperone DnaJ"/>
    <property type="match status" value="1"/>
</dbReference>
<dbReference type="Gene3D" id="1.10.287.110">
    <property type="entry name" value="DnaJ domain"/>
    <property type="match status" value="1"/>
</dbReference>
<dbReference type="Gene3D" id="2.10.230.10">
    <property type="entry name" value="Heat shock protein DnaJ, cysteine-rich domain"/>
    <property type="match status" value="1"/>
</dbReference>
<dbReference type="Gene3D" id="2.60.260.20">
    <property type="entry name" value="Urease metallochaperone UreE, N-terminal domain"/>
    <property type="match status" value="2"/>
</dbReference>
<dbReference type="HAMAP" id="MF_01152">
    <property type="entry name" value="DnaJ"/>
    <property type="match status" value="1"/>
</dbReference>
<dbReference type="InterPro" id="IPR012724">
    <property type="entry name" value="DnaJ"/>
</dbReference>
<dbReference type="InterPro" id="IPR002939">
    <property type="entry name" value="DnaJ_C"/>
</dbReference>
<dbReference type="InterPro" id="IPR001623">
    <property type="entry name" value="DnaJ_domain"/>
</dbReference>
<dbReference type="InterPro" id="IPR018253">
    <property type="entry name" value="DnaJ_domain_CS"/>
</dbReference>
<dbReference type="InterPro" id="IPR008971">
    <property type="entry name" value="HSP40/DnaJ_pept-bd"/>
</dbReference>
<dbReference type="InterPro" id="IPR001305">
    <property type="entry name" value="HSP_DnaJ_Cys-rich_dom"/>
</dbReference>
<dbReference type="InterPro" id="IPR036410">
    <property type="entry name" value="HSP_DnaJ_Cys-rich_dom_sf"/>
</dbReference>
<dbReference type="InterPro" id="IPR036869">
    <property type="entry name" value="J_dom_sf"/>
</dbReference>
<dbReference type="NCBIfam" id="TIGR02349">
    <property type="entry name" value="DnaJ_bact"/>
    <property type="match status" value="1"/>
</dbReference>
<dbReference type="NCBIfam" id="NF008035">
    <property type="entry name" value="PRK10767.1"/>
    <property type="match status" value="1"/>
</dbReference>
<dbReference type="PANTHER" id="PTHR43096:SF48">
    <property type="entry name" value="CHAPERONE PROTEIN DNAJ"/>
    <property type="match status" value="1"/>
</dbReference>
<dbReference type="PANTHER" id="PTHR43096">
    <property type="entry name" value="DNAJ HOMOLOG 1, MITOCHONDRIAL-RELATED"/>
    <property type="match status" value="1"/>
</dbReference>
<dbReference type="Pfam" id="PF00226">
    <property type="entry name" value="DnaJ"/>
    <property type="match status" value="1"/>
</dbReference>
<dbReference type="Pfam" id="PF01556">
    <property type="entry name" value="DnaJ_C"/>
    <property type="match status" value="1"/>
</dbReference>
<dbReference type="Pfam" id="PF00684">
    <property type="entry name" value="DnaJ_CXXCXGXG"/>
    <property type="match status" value="1"/>
</dbReference>
<dbReference type="PRINTS" id="PR00625">
    <property type="entry name" value="JDOMAIN"/>
</dbReference>
<dbReference type="SMART" id="SM00271">
    <property type="entry name" value="DnaJ"/>
    <property type="match status" value="1"/>
</dbReference>
<dbReference type="SUPFAM" id="SSF46565">
    <property type="entry name" value="Chaperone J-domain"/>
    <property type="match status" value="1"/>
</dbReference>
<dbReference type="SUPFAM" id="SSF57938">
    <property type="entry name" value="DnaJ/Hsp40 cysteine-rich domain"/>
    <property type="match status" value="1"/>
</dbReference>
<dbReference type="SUPFAM" id="SSF49493">
    <property type="entry name" value="HSP40/DnaJ peptide-binding domain"/>
    <property type="match status" value="2"/>
</dbReference>
<dbReference type="PROSITE" id="PS00636">
    <property type="entry name" value="DNAJ_1"/>
    <property type="match status" value="1"/>
</dbReference>
<dbReference type="PROSITE" id="PS50076">
    <property type="entry name" value="DNAJ_2"/>
    <property type="match status" value="1"/>
</dbReference>
<dbReference type="PROSITE" id="PS51188">
    <property type="entry name" value="ZF_CR"/>
    <property type="match status" value="1"/>
</dbReference>
<comment type="function">
    <text evidence="1">Participates actively in the response to hyperosmotic and heat shock by preventing the aggregation of stress-denatured proteins and by disaggregating proteins, also in an autonomous, DnaK-independent fashion. Unfolded proteins bind initially to DnaJ; upon interaction with the DnaJ-bound protein, DnaK hydrolyzes its bound ATP, resulting in the formation of a stable complex. GrpE releases ADP from DnaK; ATP binding to DnaK triggers the release of the substrate protein, thus completing the reaction cycle. Several rounds of ATP-dependent interactions between DnaJ, DnaK and GrpE are required for fully efficient folding. Also involved, together with DnaK and GrpE, in the DNA replication of plasmids through activation of initiation proteins.</text>
</comment>
<comment type="cofactor">
    <cofactor evidence="1">
        <name>Zn(2+)</name>
        <dbReference type="ChEBI" id="CHEBI:29105"/>
    </cofactor>
    <text evidence="1">Binds 2 Zn(2+) ions per monomer.</text>
</comment>
<comment type="subunit">
    <text evidence="1">Homodimer.</text>
</comment>
<comment type="subcellular location">
    <subcellularLocation>
        <location evidence="1">Cytoplasm</location>
    </subcellularLocation>
</comment>
<comment type="domain">
    <text evidence="1">The J domain is necessary and sufficient to stimulate DnaK ATPase activity. Zinc center 1 plays an important role in the autonomous, DnaK-independent chaperone activity of DnaJ. Zinc center 2 is essential for interaction with DnaK and for DnaJ activity.</text>
</comment>
<comment type="similarity">
    <text evidence="1">Belongs to the DnaJ family.</text>
</comment>
<reference key="1">
    <citation type="submission" date="2008-02" db="EMBL/GenBank/DDBJ databases">
        <title>Complete sequence of chromosome 1 of Burkholderia cenocepacia MC0-3.</title>
        <authorList>
            <person name="Copeland A."/>
            <person name="Lucas S."/>
            <person name="Lapidus A."/>
            <person name="Barry K."/>
            <person name="Bruce D."/>
            <person name="Goodwin L."/>
            <person name="Glavina del Rio T."/>
            <person name="Dalin E."/>
            <person name="Tice H."/>
            <person name="Pitluck S."/>
            <person name="Chain P."/>
            <person name="Malfatti S."/>
            <person name="Shin M."/>
            <person name="Vergez L."/>
            <person name="Schmutz J."/>
            <person name="Larimer F."/>
            <person name="Land M."/>
            <person name="Hauser L."/>
            <person name="Kyrpides N."/>
            <person name="Mikhailova N."/>
            <person name="Tiedje J."/>
            <person name="Richardson P."/>
        </authorList>
    </citation>
    <scope>NUCLEOTIDE SEQUENCE [LARGE SCALE GENOMIC DNA]</scope>
    <source>
        <strain>MC0-3</strain>
    </source>
</reference>
<sequence>MAKRDYYEVLGVAKNASDDEIKKAYRKLAMKYHPDRNPDSKDAEEHFKEAKEAYEMLSDGQKRAAYDQYGHAGVDPNMGGAGAQGFGGFADAFGDIFGDIFGQAAGGAARGGRGGPQVYRGADLRYSMEITLEQAAHGYDTQIRVPSWVSCEVCHGSGAKPGTKPETCPTCHGQGTVRMSQGFFSIQQTCPKCHGTGTYIPEPCAHCHGSGKVKETKTLEVKIPAGIDDGMRIRSAGNGEPGINGGPPGDLYVEIHIKPHSVFERDGDDLHCQMPIPFTTAALGGEIEVPTLAGRASFPVPEGTQSGKTFRLRGKGIKGLRSSIAGDLYVHVQVETPVKLTDQQRDLLKQFEKSLAEGGARHSPQSKSWFDRVKSFFE</sequence>
<proteinExistence type="inferred from homology"/>
<evidence type="ECO:0000255" key="1">
    <source>
        <dbReference type="HAMAP-Rule" id="MF_01152"/>
    </source>
</evidence>
<keyword id="KW-0143">Chaperone</keyword>
<keyword id="KW-0963">Cytoplasm</keyword>
<keyword id="KW-0235">DNA replication</keyword>
<keyword id="KW-0479">Metal-binding</keyword>
<keyword id="KW-0677">Repeat</keyword>
<keyword id="KW-0346">Stress response</keyword>
<keyword id="KW-0862">Zinc</keyword>
<keyword id="KW-0863">Zinc-finger</keyword>
<gene>
    <name evidence="1" type="primary">dnaJ</name>
    <name type="ordered locus">Bcenmc03_0722</name>
</gene>
<feature type="chain" id="PRO_1000137665" description="Chaperone protein DnaJ">
    <location>
        <begin position="1"/>
        <end position="378"/>
    </location>
</feature>
<feature type="domain" description="J" evidence="1">
    <location>
        <begin position="5"/>
        <end position="70"/>
    </location>
</feature>
<feature type="repeat" description="CXXCXGXG motif">
    <location>
        <begin position="151"/>
        <end position="158"/>
    </location>
</feature>
<feature type="repeat" description="CXXCXGXG motif">
    <location>
        <begin position="168"/>
        <end position="175"/>
    </location>
</feature>
<feature type="repeat" description="CXXCXGXG motif">
    <location>
        <begin position="190"/>
        <end position="197"/>
    </location>
</feature>
<feature type="repeat" description="CXXCXGXG motif">
    <location>
        <begin position="204"/>
        <end position="211"/>
    </location>
</feature>
<feature type="zinc finger region" description="CR-type" evidence="1">
    <location>
        <begin position="138"/>
        <end position="216"/>
    </location>
</feature>
<feature type="binding site" evidence="1">
    <location>
        <position position="151"/>
    </location>
    <ligand>
        <name>Zn(2+)</name>
        <dbReference type="ChEBI" id="CHEBI:29105"/>
        <label>1</label>
    </ligand>
</feature>
<feature type="binding site" evidence="1">
    <location>
        <position position="154"/>
    </location>
    <ligand>
        <name>Zn(2+)</name>
        <dbReference type="ChEBI" id="CHEBI:29105"/>
        <label>1</label>
    </ligand>
</feature>
<feature type="binding site" evidence="1">
    <location>
        <position position="168"/>
    </location>
    <ligand>
        <name>Zn(2+)</name>
        <dbReference type="ChEBI" id="CHEBI:29105"/>
        <label>2</label>
    </ligand>
</feature>
<feature type="binding site" evidence="1">
    <location>
        <position position="171"/>
    </location>
    <ligand>
        <name>Zn(2+)</name>
        <dbReference type="ChEBI" id="CHEBI:29105"/>
        <label>2</label>
    </ligand>
</feature>
<feature type="binding site" evidence="1">
    <location>
        <position position="190"/>
    </location>
    <ligand>
        <name>Zn(2+)</name>
        <dbReference type="ChEBI" id="CHEBI:29105"/>
        <label>2</label>
    </ligand>
</feature>
<feature type="binding site" evidence="1">
    <location>
        <position position="193"/>
    </location>
    <ligand>
        <name>Zn(2+)</name>
        <dbReference type="ChEBI" id="CHEBI:29105"/>
        <label>2</label>
    </ligand>
</feature>
<feature type="binding site" evidence="1">
    <location>
        <position position="204"/>
    </location>
    <ligand>
        <name>Zn(2+)</name>
        <dbReference type="ChEBI" id="CHEBI:29105"/>
        <label>1</label>
    </ligand>
</feature>
<feature type="binding site" evidence="1">
    <location>
        <position position="207"/>
    </location>
    <ligand>
        <name>Zn(2+)</name>
        <dbReference type="ChEBI" id="CHEBI:29105"/>
        <label>1</label>
    </ligand>
</feature>
<organism>
    <name type="scientific">Burkholderia orbicola (strain MC0-3)</name>
    <dbReference type="NCBI Taxonomy" id="406425"/>
    <lineage>
        <taxon>Bacteria</taxon>
        <taxon>Pseudomonadati</taxon>
        <taxon>Pseudomonadota</taxon>
        <taxon>Betaproteobacteria</taxon>
        <taxon>Burkholderiales</taxon>
        <taxon>Burkholderiaceae</taxon>
        <taxon>Burkholderia</taxon>
        <taxon>Burkholderia cepacia complex</taxon>
        <taxon>Burkholderia orbicola</taxon>
    </lineage>
</organism>
<name>DNAJ_BURO0</name>
<protein>
    <recommendedName>
        <fullName evidence="1">Chaperone protein DnaJ</fullName>
    </recommendedName>
</protein>